<evidence type="ECO:0000255" key="1">
    <source>
        <dbReference type="HAMAP-Rule" id="MF_00472"/>
    </source>
</evidence>
<reference key="1">
    <citation type="journal article" date="2005" name="Genome Res.">
        <title>Comparative and functional genomic analyses of the pathogenicity of phytopathogen Xanthomonas campestris pv. campestris.</title>
        <authorList>
            <person name="Qian W."/>
            <person name="Jia Y."/>
            <person name="Ren S.-X."/>
            <person name="He Y.-Q."/>
            <person name="Feng J.-X."/>
            <person name="Lu L.-F."/>
            <person name="Sun Q."/>
            <person name="Ying G."/>
            <person name="Tang D.-J."/>
            <person name="Tang H."/>
            <person name="Wu W."/>
            <person name="Hao P."/>
            <person name="Wang L."/>
            <person name="Jiang B.-L."/>
            <person name="Zeng S."/>
            <person name="Gu W.-Y."/>
            <person name="Lu G."/>
            <person name="Rong L."/>
            <person name="Tian Y."/>
            <person name="Yao Z."/>
            <person name="Fu G."/>
            <person name="Chen B."/>
            <person name="Fang R."/>
            <person name="Qiang B."/>
            <person name="Chen Z."/>
            <person name="Zhao G.-P."/>
            <person name="Tang J.-L."/>
            <person name="He C."/>
        </authorList>
    </citation>
    <scope>NUCLEOTIDE SEQUENCE [LARGE SCALE GENOMIC DNA]</scope>
    <source>
        <strain>8004</strain>
    </source>
</reference>
<proteinExistence type="inferred from homology"/>
<comment type="function">
    <text evidence="1">O-methyltransferase that catalyzes the 2 O-methylation steps in the ubiquinone biosynthetic pathway.</text>
</comment>
<comment type="catalytic activity">
    <reaction evidence="1">
        <text>a 3-demethylubiquinol + S-adenosyl-L-methionine = a ubiquinol + S-adenosyl-L-homocysteine + H(+)</text>
        <dbReference type="Rhea" id="RHEA:44380"/>
        <dbReference type="Rhea" id="RHEA-COMP:9566"/>
        <dbReference type="Rhea" id="RHEA-COMP:10914"/>
        <dbReference type="ChEBI" id="CHEBI:15378"/>
        <dbReference type="ChEBI" id="CHEBI:17976"/>
        <dbReference type="ChEBI" id="CHEBI:57856"/>
        <dbReference type="ChEBI" id="CHEBI:59789"/>
        <dbReference type="ChEBI" id="CHEBI:84422"/>
        <dbReference type="EC" id="2.1.1.64"/>
    </reaction>
</comment>
<comment type="catalytic activity">
    <reaction evidence="1">
        <text>a 3-(all-trans-polyprenyl)benzene-1,2-diol + S-adenosyl-L-methionine = a 2-methoxy-6-(all-trans-polyprenyl)phenol + S-adenosyl-L-homocysteine + H(+)</text>
        <dbReference type="Rhea" id="RHEA:31411"/>
        <dbReference type="Rhea" id="RHEA-COMP:9550"/>
        <dbReference type="Rhea" id="RHEA-COMP:9551"/>
        <dbReference type="ChEBI" id="CHEBI:15378"/>
        <dbReference type="ChEBI" id="CHEBI:57856"/>
        <dbReference type="ChEBI" id="CHEBI:59789"/>
        <dbReference type="ChEBI" id="CHEBI:62729"/>
        <dbReference type="ChEBI" id="CHEBI:62731"/>
        <dbReference type="EC" id="2.1.1.222"/>
    </reaction>
</comment>
<comment type="pathway">
    <text evidence="1">Cofactor biosynthesis; ubiquinone biosynthesis.</text>
</comment>
<comment type="similarity">
    <text evidence="1">Belongs to the methyltransferase superfamily. UbiG/COQ3 family.</text>
</comment>
<protein>
    <recommendedName>
        <fullName evidence="1">Ubiquinone biosynthesis O-methyltransferase</fullName>
    </recommendedName>
    <alternativeName>
        <fullName evidence="1">2-polyprenyl-6-hydroxyphenol methylase</fullName>
        <ecNumber evidence="1">2.1.1.222</ecNumber>
    </alternativeName>
    <alternativeName>
        <fullName evidence="1">3-demethylubiquinone 3-O-methyltransferase</fullName>
        <ecNumber evidence="1">2.1.1.64</ecNumber>
    </alternativeName>
</protein>
<keyword id="KW-0489">Methyltransferase</keyword>
<keyword id="KW-0949">S-adenosyl-L-methionine</keyword>
<keyword id="KW-0808">Transferase</keyword>
<keyword id="KW-0831">Ubiquinone biosynthesis</keyword>
<organism>
    <name type="scientific">Xanthomonas campestris pv. campestris (strain 8004)</name>
    <dbReference type="NCBI Taxonomy" id="314565"/>
    <lineage>
        <taxon>Bacteria</taxon>
        <taxon>Pseudomonadati</taxon>
        <taxon>Pseudomonadota</taxon>
        <taxon>Gammaproteobacteria</taxon>
        <taxon>Lysobacterales</taxon>
        <taxon>Lysobacteraceae</taxon>
        <taxon>Xanthomonas</taxon>
    </lineage>
</organism>
<dbReference type="EC" id="2.1.1.222" evidence="1"/>
<dbReference type="EC" id="2.1.1.64" evidence="1"/>
<dbReference type="EMBL" id="CP000050">
    <property type="protein sequence ID" value="AAY48909.1"/>
    <property type="molecule type" value="Genomic_DNA"/>
</dbReference>
<dbReference type="RefSeq" id="WP_011037413.1">
    <property type="nucleotide sequence ID" value="NZ_CP155948.1"/>
</dbReference>
<dbReference type="SMR" id="Q4UVL4"/>
<dbReference type="DNASU" id="998846"/>
<dbReference type="KEGG" id="xcb:XC_1846"/>
<dbReference type="HOGENOM" id="CLU_042432_5_0_6"/>
<dbReference type="BioCyc" id="MetaCyc:MONOMER-21245"/>
<dbReference type="UniPathway" id="UPA00232"/>
<dbReference type="Proteomes" id="UP000000420">
    <property type="component" value="Chromosome"/>
</dbReference>
<dbReference type="GO" id="GO:0102208">
    <property type="term" value="F:2-polyprenyl-6-hydroxyphenol methylase activity"/>
    <property type="evidence" value="ECO:0007669"/>
    <property type="project" value="UniProtKB-EC"/>
</dbReference>
<dbReference type="GO" id="GO:0061542">
    <property type="term" value="F:3-demethylubiquinol 3-O-methyltransferase activity"/>
    <property type="evidence" value="ECO:0007669"/>
    <property type="project" value="UniProtKB-UniRule"/>
</dbReference>
<dbReference type="GO" id="GO:0010420">
    <property type="term" value="F:polyprenyldihydroxybenzoate methyltransferase activity"/>
    <property type="evidence" value="ECO:0007669"/>
    <property type="project" value="InterPro"/>
</dbReference>
<dbReference type="GO" id="GO:0032259">
    <property type="term" value="P:methylation"/>
    <property type="evidence" value="ECO:0007669"/>
    <property type="project" value="UniProtKB-KW"/>
</dbReference>
<dbReference type="CDD" id="cd02440">
    <property type="entry name" value="AdoMet_MTases"/>
    <property type="match status" value="1"/>
</dbReference>
<dbReference type="FunFam" id="3.40.50.150:FF:000028">
    <property type="entry name" value="Ubiquinone biosynthesis O-methyltransferase"/>
    <property type="match status" value="1"/>
</dbReference>
<dbReference type="Gene3D" id="3.40.50.150">
    <property type="entry name" value="Vaccinia Virus protein VP39"/>
    <property type="match status" value="1"/>
</dbReference>
<dbReference type="HAMAP" id="MF_00472">
    <property type="entry name" value="UbiG"/>
    <property type="match status" value="1"/>
</dbReference>
<dbReference type="InterPro" id="IPR029063">
    <property type="entry name" value="SAM-dependent_MTases_sf"/>
</dbReference>
<dbReference type="InterPro" id="IPR010233">
    <property type="entry name" value="UbiG_MeTrfase"/>
</dbReference>
<dbReference type="NCBIfam" id="TIGR01983">
    <property type="entry name" value="UbiG"/>
    <property type="match status" value="1"/>
</dbReference>
<dbReference type="PANTHER" id="PTHR43464">
    <property type="entry name" value="METHYLTRANSFERASE"/>
    <property type="match status" value="1"/>
</dbReference>
<dbReference type="PANTHER" id="PTHR43464:SF19">
    <property type="entry name" value="UBIQUINONE BIOSYNTHESIS O-METHYLTRANSFERASE, MITOCHONDRIAL"/>
    <property type="match status" value="1"/>
</dbReference>
<dbReference type="Pfam" id="PF13489">
    <property type="entry name" value="Methyltransf_23"/>
    <property type="match status" value="1"/>
</dbReference>
<dbReference type="SUPFAM" id="SSF53335">
    <property type="entry name" value="S-adenosyl-L-methionine-dependent methyltransferases"/>
    <property type="match status" value="1"/>
</dbReference>
<accession>Q4UVL4</accession>
<name>UBIG_XANC8</name>
<feature type="chain" id="PRO_0000241744" description="Ubiquinone biosynthesis O-methyltransferase">
    <location>
        <begin position="1"/>
        <end position="239"/>
    </location>
</feature>
<feature type="binding site" evidence="1">
    <location>
        <position position="44"/>
    </location>
    <ligand>
        <name>S-adenosyl-L-methionine</name>
        <dbReference type="ChEBI" id="CHEBI:59789"/>
    </ligand>
</feature>
<feature type="binding site" evidence="1">
    <location>
        <position position="63"/>
    </location>
    <ligand>
        <name>S-adenosyl-L-methionine</name>
        <dbReference type="ChEBI" id="CHEBI:59789"/>
    </ligand>
</feature>
<feature type="binding site" evidence="1">
    <location>
        <position position="84"/>
    </location>
    <ligand>
        <name>S-adenosyl-L-methionine</name>
        <dbReference type="ChEBI" id="CHEBI:59789"/>
    </ligand>
</feature>
<feature type="binding site" evidence="1">
    <location>
        <position position="128"/>
    </location>
    <ligand>
        <name>S-adenosyl-L-methionine</name>
        <dbReference type="ChEBI" id="CHEBI:59789"/>
    </ligand>
</feature>
<gene>
    <name evidence="1" type="primary">ubiG</name>
    <name type="ordered locus">XC_1846</name>
</gene>
<sequence length="239" mass="26039">MNPNPQSTSSNFHQTELDKFAALANRWWDADGPQKPLHALNPVRLDYVAARVALPGARVLDVGCGGGLLSEAMARLGAQVTAIDLAPELVKVARLHSLESSVQVDYRVQSVEDLAAEQPGSFDAVTCMEMLEHVPDPLAIIRACASLLKPGGTLFLSTLNRTPAAFALAVVGAEYIARLLPKGTHHYKDFIKPSELAAWLRTAELQLQDVSGMLYEPWRNRARLSSRTEVNYLACAVKP</sequence>